<sequence length="323" mass="35358">MSNNNSKLEFVPNIQLKEDLGAFSYKVQLSPVEKGMAHILGNSIRRVLLSSLSGASIIKVNIANVLHEYSTLEDVKEDVVEIVSNLKKVAIKLDTGIDRLDLELSVNKSGVVSAGDFKTTQGVEIINKDQPIATLTNQRAFSLTATVSVGRNVGILSAIPTELERVGDIAVDADFNPIKRVAFEVFDNGDSETLEVFVKTNGTIEPLAAVTKALEYFCEQISVFVSLRVPSNGKTGDVLIDSNIDPILLKPIDDLELTVRSSNCLRAENIKYLGDLVQYSESQLMKIPNLGKKSLNEIKQILIDNNLSLGVQIDNFRELVEGK</sequence>
<evidence type="ECO:0000255" key="1">
    <source>
        <dbReference type="HAMAP-Rule" id="MF_00059"/>
    </source>
</evidence>
<dbReference type="EC" id="2.7.7.6" evidence="1"/>
<dbReference type="EMBL" id="AM286280">
    <property type="protein sequence ID" value="CAL08366.1"/>
    <property type="molecule type" value="Genomic_DNA"/>
</dbReference>
<dbReference type="RefSeq" id="WP_003021582.1">
    <property type="nucleotide sequence ID" value="NC_008245.1"/>
</dbReference>
<dbReference type="SMR" id="Q14J95"/>
<dbReference type="KEGG" id="ftf:FTF0350"/>
<dbReference type="HOGENOM" id="CLU_053084_0_0_6"/>
<dbReference type="GO" id="GO:0005737">
    <property type="term" value="C:cytoplasm"/>
    <property type="evidence" value="ECO:0007669"/>
    <property type="project" value="UniProtKB-ARBA"/>
</dbReference>
<dbReference type="GO" id="GO:0000428">
    <property type="term" value="C:DNA-directed RNA polymerase complex"/>
    <property type="evidence" value="ECO:0007669"/>
    <property type="project" value="UniProtKB-KW"/>
</dbReference>
<dbReference type="GO" id="GO:0003677">
    <property type="term" value="F:DNA binding"/>
    <property type="evidence" value="ECO:0007669"/>
    <property type="project" value="UniProtKB-UniRule"/>
</dbReference>
<dbReference type="GO" id="GO:0003899">
    <property type="term" value="F:DNA-directed RNA polymerase activity"/>
    <property type="evidence" value="ECO:0007669"/>
    <property type="project" value="UniProtKB-UniRule"/>
</dbReference>
<dbReference type="GO" id="GO:0046983">
    <property type="term" value="F:protein dimerization activity"/>
    <property type="evidence" value="ECO:0007669"/>
    <property type="project" value="InterPro"/>
</dbReference>
<dbReference type="GO" id="GO:0006351">
    <property type="term" value="P:DNA-templated transcription"/>
    <property type="evidence" value="ECO:0007669"/>
    <property type="project" value="UniProtKB-UniRule"/>
</dbReference>
<dbReference type="CDD" id="cd06928">
    <property type="entry name" value="RNAP_alpha_NTD"/>
    <property type="match status" value="1"/>
</dbReference>
<dbReference type="FunFam" id="1.10.150.20:FF:000001">
    <property type="entry name" value="DNA-directed RNA polymerase subunit alpha"/>
    <property type="match status" value="1"/>
</dbReference>
<dbReference type="Gene3D" id="1.10.150.20">
    <property type="entry name" value="5' to 3' exonuclease, C-terminal subdomain"/>
    <property type="match status" value="1"/>
</dbReference>
<dbReference type="Gene3D" id="2.170.120.12">
    <property type="entry name" value="DNA-directed RNA polymerase, insert domain"/>
    <property type="match status" value="1"/>
</dbReference>
<dbReference type="Gene3D" id="3.30.1360.10">
    <property type="entry name" value="RNA polymerase, RBP11-like subunit"/>
    <property type="match status" value="1"/>
</dbReference>
<dbReference type="HAMAP" id="MF_00059">
    <property type="entry name" value="RNApol_bact_RpoA"/>
    <property type="match status" value="1"/>
</dbReference>
<dbReference type="InterPro" id="IPR011262">
    <property type="entry name" value="DNA-dir_RNA_pol_insert"/>
</dbReference>
<dbReference type="InterPro" id="IPR011263">
    <property type="entry name" value="DNA-dir_RNA_pol_RpoA/D/Rpb3"/>
</dbReference>
<dbReference type="InterPro" id="IPR011773">
    <property type="entry name" value="DNA-dir_RpoA"/>
</dbReference>
<dbReference type="InterPro" id="IPR036603">
    <property type="entry name" value="RBP11-like"/>
</dbReference>
<dbReference type="InterPro" id="IPR011260">
    <property type="entry name" value="RNAP_asu_C"/>
</dbReference>
<dbReference type="InterPro" id="IPR036643">
    <property type="entry name" value="RNApol_insert_sf"/>
</dbReference>
<dbReference type="NCBIfam" id="NF003513">
    <property type="entry name" value="PRK05182.1-2"/>
    <property type="match status" value="1"/>
</dbReference>
<dbReference type="NCBIfam" id="TIGR02027">
    <property type="entry name" value="rpoA"/>
    <property type="match status" value="1"/>
</dbReference>
<dbReference type="Pfam" id="PF01000">
    <property type="entry name" value="RNA_pol_A_bac"/>
    <property type="match status" value="1"/>
</dbReference>
<dbReference type="Pfam" id="PF03118">
    <property type="entry name" value="RNA_pol_A_CTD"/>
    <property type="match status" value="1"/>
</dbReference>
<dbReference type="Pfam" id="PF01193">
    <property type="entry name" value="RNA_pol_L"/>
    <property type="match status" value="1"/>
</dbReference>
<dbReference type="SMART" id="SM00662">
    <property type="entry name" value="RPOLD"/>
    <property type="match status" value="1"/>
</dbReference>
<dbReference type="SUPFAM" id="SSF47789">
    <property type="entry name" value="C-terminal domain of RNA polymerase alpha subunit"/>
    <property type="match status" value="1"/>
</dbReference>
<dbReference type="SUPFAM" id="SSF56553">
    <property type="entry name" value="Insert subdomain of RNA polymerase alpha subunit"/>
    <property type="match status" value="1"/>
</dbReference>
<dbReference type="SUPFAM" id="SSF55257">
    <property type="entry name" value="RBP11-like subunits of RNA polymerase"/>
    <property type="match status" value="1"/>
</dbReference>
<organism>
    <name type="scientific">Francisella tularensis subsp. tularensis (strain FSC 198)</name>
    <dbReference type="NCBI Taxonomy" id="393115"/>
    <lineage>
        <taxon>Bacteria</taxon>
        <taxon>Pseudomonadati</taxon>
        <taxon>Pseudomonadota</taxon>
        <taxon>Gammaproteobacteria</taxon>
        <taxon>Thiotrichales</taxon>
        <taxon>Francisellaceae</taxon>
        <taxon>Francisella</taxon>
    </lineage>
</organism>
<reference key="1">
    <citation type="journal article" date="2007" name="PLoS ONE">
        <title>Genome sequencing shows that European isolates of Francisella tularensis subspecies tularensis are almost identical to US laboratory strain Schu S4.</title>
        <authorList>
            <person name="Chaudhuri R.R."/>
            <person name="Ren C.-P."/>
            <person name="Desmond L."/>
            <person name="Vincent G.A."/>
            <person name="Silman N.J."/>
            <person name="Brehm J.K."/>
            <person name="Elmore M.J."/>
            <person name="Hudson M.J."/>
            <person name="Forsman M."/>
            <person name="Isherwood K.E."/>
            <person name="Gurycova D."/>
            <person name="Minton N.P."/>
            <person name="Titball R.W."/>
            <person name="Pallen M.J."/>
            <person name="Vipond R."/>
        </authorList>
    </citation>
    <scope>NUCLEOTIDE SEQUENCE [LARGE SCALE GENOMIC DNA]</scope>
    <source>
        <strain>FSC 198</strain>
    </source>
</reference>
<comment type="function">
    <text evidence="1">DNA-dependent RNA polymerase catalyzes the transcription of DNA into RNA using the four ribonucleoside triphosphates as substrates.</text>
</comment>
<comment type="catalytic activity">
    <reaction evidence="1">
        <text>RNA(n) + a ribonucleoside 5'-triphosphate = RNA(n+1) + diphosphate</text>
        <dbReference type="Rhea" id="RHEA:21248"/>
        <dbReference type="Rhea" id="RHEA-COMP:14527"/>
        <dbReference type="Rhea" id="RHEA-COMP:17342"/>
        <dbReference type="ChEBI" id="CHEBI:33019"/>
        <dbReference type="ChEBI" id="CHEBI:61557"/>
        <dbReference type="ChEBI" id="CHEBI:140395"/>
        <dbReference type="EC" id="2.7.7.6"/>
    </reaction>
</comment>
<comment type="subunit">
    <text evidence="1">Homodimer. The RNAP catalytic core consists of 2 alpha, 1 beta, 1 beta' and 1 omega subunit. When a sigma factor is associated with the core the holoenzyme is formed, which can initiate transcription.</text>
</comment>
<comment type="domain">
    <text evidence="1">The N-terminal domain is essential for RNAP assembly and basal transcription, whereas the C-terminal domain is involved in interaction with transcriptional regulators and with upstream promoter elements.</text>
</comment>
<comment type="similarity">
    <text evidence="1">Belongs to the RNA polymerase alpha chain family.</text>
</comment>
<gene>
    <name evidence="1" type="primary">rpoA1</name>
    <name type="ordered locus">FTF0350</name>
</gene>
<proteinExistence type="inferred from homology"/>
<feature type="chain" id="PRO_0000296810" description="DNA-directed RNA polymerase subunit alpha 1">
    <location>
        <begin position="1"/>
        <end position="323"/>
    </location>
</feature>
<feature type="region of interest" description="Alpha N-terminal domain (alpha-NTD)" evidence="1">
    <location>
        <begin position="1"/>
        <end position="228"/>
    </location>
</feature>
<feature type="region of interest" description="Alpha C-terminal domain (alpha-CTD)" evidence="1">
    <location>
        <begin position="244"/>
        <end position="323"/>
    </location>
</feature>
<protein>
    <recommendedName>
        <fullName evidence="1">DNA-directed RNA polymerase subunit alpha 1</fullName>
        <shortName evidence="1">RNAP subunit alpha 1</shortName>
        <ecNumber evidence="1">2.7.7.6</ecNumber>
    </recommendedName>
    <alternativeName>
        <fullName evidence="1">RNA polymerase subunit alpha 1</fullName>
    </alternativeName>
    <alternativeName>
        <fullName evidence="1">Transcriptase subunit alpha 1</fullName>
    </alternativeName>
</protein>
<name>RPOA1_FRAT1</name>
<keyword id="KW-0240">DNA-directed RNA polymerase</keyword>
<keyword id="KW-0548">Nucleotidyltransferase</keyword>
<keyword id="KW-0804">Transcription</keyword>
<keyword id="KW-0808">Transferase</keyword>
<accession>Q14J95</accession>